<keyword id="KW-1003">Cell membrane</keyword>
<keyword id="KW-0297">G-protein coupled receptor</keyword>
<keyword id="KW-0325">Glycoprotein</keyword>
<keyword id="KW-0472">Membrane</keyword>
<keyword id="KW-0675">Receptor</keyword>
<keyword id="KW-0807">Transducer</keyword>
<keyword id="KW-0812">Transmembrane</keyword>
<keyword id="KW-1133">Transmembrane helix</keyword>
<organism>
    <name type="scientific">Varecia rubra</name>
    <name type="common">Red ruffed lemur</name>
    <name type="synonym">Varecia variegata rubra</name>
    <dbReference type="NCBI Taxonomy" id="554167"/>
    <lineage>
        <taxon>Eukaryota</taxon>
        <taxon>Metazoa</taxon>
        <taxon>Chordata</taxon>
        <taxon>Craniata</taxon>
        <taxon>Vertebrata</taxon>
        <taxon>Euteleostomi</taxon>
        <taxon>Mammalia</taxon>
        <taxon>Eutheria</taxon>
        <taxon>Euarchontoglires</taxon>
        <taxon>Primates</taxon>
        <taxon>Strepsirrhini</taxon>
        <taxon>Lemuriformes</taxon>
        <taxon>Lemuridae</taxon>
        <taxon>Varecia</taxon>
    </lineage>
</organism>
<comment type="function">
    <text evidence="1">Receptor for MSH (alpha, beta and gamma) and ACTH. The activity of this receptor is mediated by G proteins which activate adenylate cyclase. Mediates melanogenesis, the production of eumelanin (black/brown) and phaeomelanin (red/yellow), via regulation of cAMP signaling in melanocytes.</text>
</comment>
<comment type="subunit">
    <text evidence="1">Interacts with MGRN1, but does not undergo MGRN1-mediated ubiquitination; this interaction competes with GNAS-binding and thus inhibits agonist-induced cAMP production. Interacts with OPN3; the interaction results in a decrease in MC1R-mediated cAMP signaling and ultimately a decrease in melanin production in melanocytes.</text>
</comment>
<comment type="subcellular location">
    <subcellularLocation>
        <location evidence="1">Cell membrane</location>
        <topology evidence="2">Multi-pass membrane protein</topology>
    </subcellularLocation>
</comment>
<comment type="similarity">
    <text evidence="3">Belongs to the G-protein coupled receptor 1 family.</text>
</comment>
<accession>Q864F8</accession>
<evidence type="ECO:0000250" key="1">
    <source>
        <dbReference type="UniProtKB" id="Q01726"/>
    </source>
</evidence>
<evidence type="ECO:0000255" key="2"/>
<evidence type="ECO:0000255" key="3">
    <source>
        <dbReference type="PROSITE-ProRule" id="PRU00521"/>
    </source>
</evidence>
<feature type="chain" id="PRO_0000069856" description="Melanocyte-stimulating hormone receptor">
    <location>
        <begin position="1"/>
        <end position="317"/>
    </location>
</feature>
<feature type="topological domain" description="Extracellular" evidence="2">
    <location>
        <begin position="1"/>
        <end position="37"/>
    </location>
</feature>
<feature type="transmembrane region" description="Helical; Name=1" evidence="2">
    <location>
        <begin position="38"/>
        <end position="63"/>
    </location>
</feature>
<feature type="topological domain" description="Cytoplasmic" evidence="2">
    <location>
        <begin position="64"/>
        <end position="72"/>
    </location>
</feature>
<feature type="transmembrane region" description="Helical; Name=2" evidence="2">
    <location>
        <begin position="73"/>
        <end position="93"/>
    </location>
</feature>
<feature type="topological domain" description="Extracellular" evidence="2">
    <location>
        <begin position="94"/>
        <end position="118"/>
    </location>
</feature>
<feature type="transmembrane region" description="Helical; Name=3" evidence="2">
    <location>
        <begin position="119"/>
        <end position="140"/>
    </location>
</feature>
<feature type="topological domain" description="Cytoplasmic" evidence="2">
    <location>
        <begin position="141"/>
        <end position="163"/>
    </location>
</feature>
<feature type="transmembrane region" description="Helical; Name=4" evidence="2">
    <location>
        <begin position="164"/>
        <end position="183"/>
    </location>
</feature>
<feature type="topological domain" description="Extracellular" evidence="2">
    <location>
        <begin position="184"/>
        <end position="191"/>
    </location>
</feature>
<feature type="transmembrane region" description="Helical; Name=5" evidence="2">
    <location>
        <begin position="192"/>
        <end position="211"/>
    </location>
</feature>
<feature type="topological domain" description="Cytoplasmic" evidence="2">
    <location>
        <begin position="212"/>
        <end position="240"/>
    </location>
</feature>
<feature type="transmembrane region" description="Helical; Name=6" evidence="2">
    <location>
        <begin position="241"/>
        <end position="266"/>
    </location>
</feature>
<feature type="topological domain" description="Extracellular" evidence="2">
    <location>
        <begin position="267"/>
        <end position="279"/>
    </location>
</feature>
<feature type="transmembrane region" description="Helical; Name=7" evidence="2">
    <location>
        <begin position="280"/>
        <end position="300"/>
    </location>
</feature>
<feature type="topological domain" description="Cytoplasmic" evidence="2">
    <location>
        <begin position="301"/>
        <end position="317"/>
    </location>
</feature>
<feature type="glycosylation site" description="N-linked (GlcNAc...) asparagine" evidence="2">
    <location>
        <position position="29"/>
    </location>
</feature>
<protein>
    <recommendedName>
        <fullName>Melanocyte-stimulating hormone receptor</fullName>
        <shortName>MSH-R</shortName>
    </recommendedName>
    <alternativeName>
        <fullName>Melanocortin receptor 1</fullName>
        <shortName>MC1-R</shortName>
    </alternativeName>
</protein>
<reference key="1">
    <citation type="journal article" date="2003" name="Am. J. Phys. Anthropol.">
        <title>Evolution of a pigmentation gene, the melanocortin-1 receptor, in primates.</title>
        <authorList>
            <person name="Mundy N.I."/>
            <person name="Kelly J."/>
        </authorList>
    </citation>
    <scope>NUCLEOTIDE SEQUENCE [GENOMIC DNA]</scope>
    <source>
        <strain>Isolate 5</strain>
    </source>
</reference>
<gene>
    <name type="primary">MC1R</name>
</gene>
<name>MSHR_VARRB</name>
<sequence length="317" mass="34715">MPVQGSLRSLVGAVNSTPTASPHLRPATNQTEPQCLEVSVPVGLFLCLGLVSLVENTLVVAVIAKNRNLHSPMYCFICCLALSDLLVSVSNVLKTAVLLLLEAGALAAQATVVQQLGNVINMLICSSMVSSLCFLGAIAMDRYISIFYALRYHSIVTLARARRAIAAVWVASILSSILFFTYYDRTAALLCLVVFFLAMLVLMAVLYVHMLTQACQHAQGIARLHKRQHPVQQGWGLKGAATLAVLLGVFFLCWGPLFLHLTLIAVCPQHPTCNCIVKNFKLFLALIICNAIVDPLIYAFRSQELRKTLKEVLLFSW</sequence>
<dbReference type="EMBL" id="AY205139">
    <property type="protein sequence ID" value="AAP31013.1"/>
    <property type="molecule type" value="Genomic_DNA"/>
</dbReference>
<dbReference type="SMR" id="Q864F8"/>
<dbReference type="GlyCosmos" id="Q864F8">
    <property type="glycosylation" value="1 site, No reported glycans"/>
</dbReference>
<dbReference type="GO" id="GO:0005886">
    <property type="term" value="C:plasma membrane"/>
    <property type="evidence" value="ECO:0000250"/>
    <property type="project" value="UniProtKB"/>
</dbReference>
<dbReference type="GO" id="GO:0004980">
    <property type="term" value="F:melanocyte-stimulating hormone receptor activity"/>
    <property type="evidence" value="ECO:0007669"/>
    <property type="project" value="InterPro"/>
</dbReference>
<dbReference type="GO" id="GO:0007189">
    <property type="term" value="P:adenylate cyclase-activating G protein-coupled receptor signaling pathway"/>
    <property type="evidence" value="ECO:0007669"/>
    <property type="project" value="UniProtKB-ARBA"/>
</dbReference>
<dbReference type="FunFam" id="1.20.1070.10:FF:000211">
    <property type="entry name" value="Melanocyte-stimulating hormone receptor"/>
    <property type="match status" value="1"/>
</dbReference>
<dbReference type="Gene3D" id="1.20.1070.10">
    <property type="entry name" value="Rhodopsin 7-helix transmembrane proteins"/>
    <property type="match status" value="1"/>
</dbReference>
<dbReference type="InterPro" id="IPR000276">
    <property type="entry name" value="GPCR_Rhodpsn"/>
</dbReference>
<dbReference type="InterPro" id="IPR017452">
    <property type="entry name" value="GPCR_Rhodpsn_7TM"/>
</dbReference>
<dbReference type="InterPro" id="IPR001671">
    <property type="entry name" value="Melcrt_ACTH_rcpt"/>
</dbReference>
<dbReference type="InterPro" id="IPR000761">
    <property type="entry name" value="MSH_rcpt"/>
</dbReference>
<dbReference type="PANTHER" id="PTHR22750">
    <property type="entry name" value="G-PROTEIN COUPLED RECEPTOR"/>
    <property type="match status" value="1"/>
</dbReference>
<dbReference type="Pfam" id="PF00001">
    <property type="entry name" value="7tm_1"/>
    <property type="match status" value="1"/>
</dbReference>
<dbReference type="PRINTS" id="PR00237">
    <property type="entry name" value="GPCRRHODOPSN"/>
</dbReference>
<dbReference type="PRINTS" id="PR00534">
    <property type="entry name" value="MCRFAMILY"/>
</dbReference>
<dbReference type="PRINTS" id="PR00536">
    <property type="entry name" value="MELNOCYTESHR"/>
</dbReference>
<dbReference type="SMART" id="SM01381">
    <property type="entry name" value="7TM_GPCR_Srsx"/>
    <property type="match status" value="1"/>
</dbReference>
<dbReference type="SUPFAM" id="SSF81321">
    <property type="entry name" value="Family A G protein-coupled receptor-like"/>
    <property type="match status" value="1"/>
</dbReference>
<dbReference type="PROSITE" id="PS00237">
    <property type="entry name" value="G_PROTEIN_RECEP_F1_1"/>
    <property type="match status" value="1"/>
</dbReference>
<dbReference type="PROSITE" id="PS50262">
    <property type="entry name" value="G_PROTEIN_RECEP_F1_2"/>
    <property type="match status" value="1"/>
</dbReference>
<proteinExistence type="inferred from homology"/>